<organism>
    <name type="scientific">Buchnera aphidicola subsp. Baizongia pistaciae (strain Bp)</name>
    <dbReference type="NCBI Taxonomy" id="224915"/>
    <lineage>
        <taxon>Bacteria</taxon>
        <taxon>Pseudomonadati</taxon>
        <taxon>Pseudomonadota</taxon>
        <taxon>Gammaproteobacteria</taxon>
        <taxon>Enterobacterales</taxon>
        <taxon>Erwiniaceae</taxon>
        <taxon>Buchnera</taxon>
    </lineage>
</organism>
<proteinExistence type="inferred from homology"/>
<sequence length="115" mass="13249">MDNFISHIYAVENSTTIPSSNSYSLIFMLLVFLSIFYFMIFRPQRKKIQEHDRLIKSLSYGDEVFTSSGFVGKIVKITKTGYIVLELNNNVEVFVKSDFIVSIFPKGTLKNMKSM</sequence>
<gene>
    <name type="primary">yajC</name>
    <name type="ordered locus">bbp_125</name>
</gene>
<name>YAJC_BUCBP</name>
<comment type="function">
    <text evidence="1">The SecYEG-SecDF-YajC-YidC holo-translocon (HTL) protein secretase/insertase is a supercomplex required for protein secretion, insertion of proteins into membranes, and assembly of membrane protein complexes. While the SecYEG complex is essential for assembly of a number of proteins and complexes, the SecDF-YajC-YidC subcomplex facilitates these functions.</text>
</comment>
<comment type="subunit">
    <text evidence="1">Part of the SecDF-YidC-YajC translocase complex. The SecDF-YidC-YajC translocase forms a supercomplex with SecYEG, called the holo-translocon (HTL).</text>
</comment>
<comment type="subcellular location">
    <subcellularLocation>
        <location evidence="1">Cell inner membrane</location>
        <topology evidence="1">Single-pass membrane protein</topology>
    </subcellularLocation>
</comment>
<comment type="similarity">
    <text evidence="3">Belongs to the YajC family.</text>
</comment>
<feature type="chain" id="PRO_0000097028" description="Sec translocon accessory complex subunit YajC">
    <location>
        <begin position="1"/>
        <end position="115"/>
    </location>
</feature>
<feature type="transmembrane region" description="Helical" evidence="2">
    <location>
        <begin position="22"/>
        <end position="41"/>
    </location>
</feature>
<protein>
    <recommendedName>
        <fullName>Sec translocon accessory complex subunit YajC</fullName>
    </recommendedName>
</protein>
<accession>Q89AV7</accession>
<dbReference type="EMBL" id="AE016826">
    <property type="protein sequence ID" value="AAO26859.1"/>
    <property type="molecule type" value="Genomic_DNA"/>
</dbReference>
<dbReference type="RefSeq" id="WP_011091260.1">
    <property type="nucleotide sequence ID" value="NC_004545.1"/>
</dbReference>
<dbReference type="SMR" id="Q89AV7"/>
<dbReference type="STRING" id="224915.bbp_125"/>
<dbReference type="KEGG" id="bab:bbp_125"/>
<dbReference type="eggNOG" id="COG1862">
    <property type="taxonomic scope" value="Bacteria"/>
</dbReference>
<dbReference type="HOGENOM" id="CLU_116157_2_1_6"/>
<dbReference type="OrthoDB" id="9811406at2"/>
<dbReference type="Proteomes" id="UP000000601">
    <property type="component" value="Chromosome"/>
</dbReference>
<dbReference type="GO" id="GO:0005886">
    <property type="term" value="C:plasma membrane"/>
    <property type="evidence" value="ECO:0007669"/>
    <property type="project" value="UniProtKB-SubCell"/>
</dbReference>
<dbReference type="GO" id="GO:0015031">
    <property type="term" value="P:protein transport"/>
    <property type="evidence" value="ECO:0007669"/>
    <property type="project" value="UniProtKB-KW"/>
</dbReference>
<dbReference type="InterPro" id="IPR003849">
    <property type="entry name" value="Preprotein_translocase_YajC"/>
</dbReference>
<dbReference type="NCBIfam" id="TIGR00739">
    <property type="entry name" value="yajC"/>
    <property type="match status" value="1"/>
</dbReference>
<dbReference type="PANTHER" id="PTHR33909">
    <property type="entry name" value="SEC TRANSLOCON ACCESSORY COMPLEX SUBUNIT YAJC"/>
    <property type="match status" value="1"/>
</dbReference>
<dbReference type="PANTHER" id="PTHR33909:SF1">
    <property type="entry name" value="SEC TRANSLOCON ACCESSORY COMPLEX SUBUNIT YAJC"/>
    <property type="match status" value="1"/>
</dbReference>
<dbReference type="Pfam" id="PF02699">
    <property type="entry name" value="YajC"/>
    <property type="match status" value="1"/>
</dbReference>
<dbReference type="PRINTS" id="PR01853">
    <property type="entry name" value="YAJCTRNLCASE"/>
</dbReference>
<dbReference type="SMART" id="SM01323">
    <property type="entry name" value="YajC"/>
    <property type="match status" value="1"/>
</dbReference>
<keyword id="KW-0997">Cell inner membrane</keyword>
<keyword id="KW-1003">Cell membrane</keyword>
<keyword id="KW-0472">Membrane</keyword>
<keyword id="KW-0653">Protein transport</keyword>
<keyword id="KW-1185">Reference proteome</keyword>
<keyword id="KW-0811">Translocation</keyword>
<keyword id="KW-0812">Transmembrane</keyword>
<keyword id="KW-1133">Transmembrane helix</keyword>
<keyword id="KW-0813">Transport</keyword>
<evidence type="ECO:0000250" key="1">
    <source>
        <dbReference type="UniProtKB" id="P0ADZ7"/>
    </source>
</evidence>
<evidence type="ECO:0000255" key="2"/>
<evidence type="ECO:0000305" key="3"/>
<reference key="1">
    <citation type="journal article" date="2003" name="Proc. Natl. Acad. Sci. U.S.A.">
        <title>Reductive genome evolution in Buchnera aphidicola.</title>
        <authorList>
            <person name="van Ham R.C.H.J."/>
            <person name="Kamerbeek J."/>
            <person name="Palacios C."/>
            <person name="Rausell C."/>
            <person name="Abascal F."/>
            <person name="Bastolla U."/>
            <person name="Fernandez J.M."/>
            <person name="Jimenez L."/>
            <person name="Postigo M."/>
            <person name="Silva F.J."/>
            <person name="Tamames J."/>
            <person name="Viguera E."/>
            <person name="Latorre A."/>
            <person name="Valencia A."/>
            <person name="Moran F."/>
            <person name="Moya A."/>
        </authorList>
    </citation>
    <scope>NUCLEOTIDE SEQUENCE [LARGE SCALE GENOMIC DNA]</scope>
    <source>
        <strain>Bp</strain>
    </source>
</reference>